<sequence>MSEKTVKVQLVKSLIGTRESHRATVRGLGLRRLNSVSELQDTPAVRGMINKVSYLVKVIA</sequence>
<feature type="chain" id="PRO_0000347089" description="Large ribosomal subunit protein uL30">
    <location>
        <begin position="1"/>
        <end position="60"/>
    </location>
</feature>
<proteinExistence type="inferred from homology"/>
<dbReference type="EMBL" id="CP000868">
    <property type="protein sequence ID" value="ABX13962.1"/>
    <property type="status" value="ALT_INIT"/>
    <property type="molecule type" value="Genomic_DNA"/>
</dbReference>
<dbReference type="EMBL" id="AP009385">
    <property type="protein sequence ID" value="BAG44872.1"/>
    <property type="molecule type" value="Genomic_DNA"/>
</dbReference>
<dbReference type="RefSeq" id="WP_006400644.1">
    <property type="nucleotide sequence ID" value="NC_010804.1"/>
</dbReference>
<dbReference type="SMR" id="A9ADL1"/>
<dbReference type="STRING" id="395019.BMULJ_02987"/>
<dbReference type="GeneID" id="98107142"/>
<dbReference type="KEGG" id="bmj:BMULJ_02987"/>
<dbReference type="KEGG" id="bmu:Bmul_0267"/>
<dbReference type="eggNOG" id="COG1841">
    <property type="taxonomic scope" value="Bacteria"/>
</dbReference>
<dbReference type="HOGENOM" id="CLU_131047_1_4_4"/>
<dbReference type="Proteomes" id="UP000008815">
    <property type="component" value="Chromosome 1"/>
</dbReference>
<dbReference type="GO" id="GO:0022625">
    <property type="term" value="C:cytosolic large ribosomal subunit"/>
    <property type="evidence" value="ECO:0007669"/>
    <property type="project" value="TreeGrafter"/>
</dbReference>
<dbReference type="GO" id="GO:0003735">
    <property type="term" value="F:structural constituent of ribosome"/>
    <property type="evidence" value="ECO:0007669"/>
    <property type="project" value="InterPro"/>
</dbReference>
<dbReference type="GO" id="GO:0006412">
    <property type="term" value="P:translation"/>
    <property type="evidence" value="ECO:0007669"/>
    <property type="project" value="UniProtKB-UniRule"/>
</dbReference>
<dbReference type="CDD" id="cd01658">
    <property type="entry name" value="Ribosomal_L30"/>
    <property type="match status" value="1"/>
</dbReference>
<dbReference type="FunFam" id="3.30.1390.20:FF:000001">
    <property type="entry name" value="50S ribosomal protein L30"/>
    <property type="match status" value="1"/>
</dbReference>
<dbReference type="Gene3D" id="3.30.1390.20">
    <property type="entry name" value="Ribosomal protein L30, ferredoxin-like fold domain"/>
    <property type="match status" value="1"/>
</dbReference>
<dbReference type="HAMAP" id="MF_01371_B">
    <property type="entry name" value="Ribosomal_uL30_B"/>
    <property type="match status" value="1"/>
</dbReference>
<dbReference type="InterPro" id="IPR036919">
    <property type="entry name" value="Ribo_uL30_ferredoxin-like_sf"/>
</dbReference>
<dbReference type="InterPro" id="IPR005996">
    <property type="entry name" value="Ribosomal_uL30_bac-type"/>
</dbReference>
<dbReference type="InterPro" id="IPR016082">
    <property type="entry name" value="Ribosomal_uL30_ferredoxin-like"/>
</dbReference>
<dbReference type="NCBIfam" id="TIGR01308">
    <property type="entry name" value="rpmD_bact"/>
    <property type="match status" value="1"/>
</dbReference>
<dbReference type="PANTHER" id="PTHR15892:SF2">
    <property type="entry name" value="LARGE RIBOSOMAL SUBUNIT PROTEIN UL30M"/>
    <property type="match status" value="1"/>
</dbReference>
<dbReference type="PANTHER" id="PTHR15892">
    <property type="entry name" value="MITOCHONDRIAL RIBOSOMAL PROTEIN L30"/>
    <property type="match status" value="1"/>
</dbReference>
<dbReference type="Pfam" id="PF00327">
    <property type="entry name" value="Ribosomal_L30"/>
    <property type="match status" value="1"/>
</dbReference>
<dbReference type="PIRSF" id="PIRSF002211">
    <property type="entry name" value="Ribosomal_L30_bac-type"/>
    <property type="match status" value="1"/>
</dbReference>
<dbReference type="SUPFAM" id="SSF55129">
    <property type="entry name" value="Ribosomal protein L30p/L7e"/>
    <property type="match status" value="1"/>
</dbReference>
<evidence type="ECO:0000255" key="1">
    <source>
        <dbReference type="HAMAP-Rule" id="MF_01371"/>
    </source>
</evidence>
<evidence type="ECO:0000305" key="2"/>
<name>RL30_BURM1</name>
<gene>
    <name evidence="1" type="primary">rpmD</name>
    <name type="ordered locus">Bmul_0267</name>
    <name type="ordered locus">BMULJ_02987</name>
</gene>
<accession>A9ADL1</accession>
<accession>B3D4B0</accession>
<keyword id="KW-1185">Reference proteome</keyword>
<keyword id="KW-0687">Ribonucleoprotein</keyword>
<keyword id="KW-0689">Ribosomal protein</keyword>
<comment type="subunit">
    <text evidence="1">Part of the 50S ribosomal subunit.</text>
</comment>
<comment type="similarity">
    <text evidence="1">Belongs to the universal ribosomal protein uL30 family.</text>
</comment>
<comment type="sequence caution" evidence="2">
    <conflict type="erroneous initiation">
        <sequence resource="EMBL-CDS" id="ABX13962"/>
    </conflict>
</comment>
<protein>
    <recommendedName>
        <fullName evidence="1">Large ribosomal subunit protein uL30</fullName>
    </recommendedName>
    <alternativeName>
        <fullName evidence="2">50S ribosomal protein L30</fullName>
    </alternativeName>
</protein>
<organism>
    <name type="scientific">Burkholderia multivorans (strain ATCC 17616 / 249)</name>
    <dbReference type="NCBI Taxonomy" id="395019"/>
    <lineage>
        <taxon>Bacteria</taxon>
        <taxon>Pseudomonadati</taxon>
        <taxon>Pseudomonadota</taxon>
        <taxon>Betaproteobacteria</taxon>
        <taxon>Burkholderiales</taxon>
        <taxon>Burkholderiaceae</taxon>
        <taxon>Burkholderia</taxon>
        <taxon>Burkholderia cepacia complex</taxon>
    </lineage>
</organism>
<reference key="1">
    <citation type="submission" date="2007-10" db="EMBL/GenBank/DDBJ databases">
        <title>Complete sequence of chromosome 1 of Burkholderia multivorans ATCC 17616.</title>
        <authorList>
            <person name="Copeland A."/>
            <person name="Lucas S."/>
            <person name="Lapidus A."/>
            <person name="Barry K."/>
            <person name="Glavina del Rio T."/>
            <person name="Dalin E."/>
            <person name="Tice H."/>
            <person name="Pitluck S."/>
            <person name="Chain P."/>
            <person name="Malfatti S."/>
            <person name="Shin M."/>
            <person name="Vergez L."/>
            <person name="Schmutz J."/>
            <person name="Larimer F."/>
            <person name="Land M."/>
            <person name="Hauser L."/>
            <person name="Kyrpides N."/>
            <person name="Kim E."/>
            <person name="Tiedje J."/>
            <person name="Richardson P."/>
        </authorList>
    </citation>
    <scope>NUCLEOTIDE SEQUENCE [LARGE SCALE GENOMIC DNA]</scope>
    <source>
        <strain>ATCC 17616 / 249</strain>
    </source>
</reference>
<reference key="2">
    <citation type="submission" date="2007-04" db="EMBL/GenBank/DDBJ databases">
        <title>Complete genome sequence of Burkholderia multivorans ATCC 17616.</title>
        <authorList>
            <person name="Ohtsubo Y."/>
            <person name="Yamashita A."/>
            <person name="Kurokawa K."/>
            <person name="Takami H."/>
            <person name="Yuhara S."/>
            <person name="Nishiyama E."/>
            <person name="Endo R."/>
            <person name="Miyazaki R."/>
            <person name="Ono A."/>
            <person name="Yano K."/>
            <person name="Ito M."/>
            <person name="Sota M."/>
            <person name="Yuji N."/>
            <person name="Hattori M."/>
            <person name="Tsuda M."/>
        </authorList>
    </citation>
    <scope>NUCLEOTIDE SEQUENCE [LARGE SCALE GENOMIC DNA]</scope>
    <source>
        <strain>ATCC 17616 / 249</strain>
    </source>
</reference>